<sequence>MPVVNHEDSEFHLSHTEEDKLNEFQVITNFPPEDLPDVVRLLRNHGWQLEPALSRYFDGEWKGEPDQMGEPTQTSTPMAETLVPPALGPRPLLFTASLPVVRPLPANFRNDFRTIGLNGRSNTVWSMFESFSYDGNPFLFILLLIPRIINRLSATIFTFFCTLLSLHSISGGGNSGKPKISKVPKAPTRETHIPLAEILGDTKDKDAFCELKSFKPDISFNEALRIAKEEFKFMLLILVGDTYDTDTDTVDVNSKLLLEKILLNKKTLQYLRKIDNDLIIYLKCVHELEPWLVARQLGVRNTPEIFLIANVANKASHSETLPSQRLSILGKLKVNSLNRFLQSLTNVVEKYTPELVVNKTEMHELRMSREIKKLQEDAYKKSLEMDRIKAIEKEKSLKHAQDLKLNSTARQLKWLKACIDEIQPFETTGKQATLQFRTSSGKRFVKKFPSMTTLYQIYQSIGCHIYLAVYSSDPAEWSNALQDKIRQLSADDDMLCFKEGQLETATATTIEELGHIINNELTSFDLERGKLEFDFELVSPFPKYTVHPNEHMSVDQVPQLWPNGSLLVEALDEEDEEDEENEEQ</sequence>
<organism>
    <name type="scientific">Saccharomyces cerevisiae (strain ATCC 204508 / S288c)</name>
    <name type="common">Baker's yeast</name>
    <dbReference type="NCBI Taxonomy" id="559292"/>
    <lineage>
        <taxon>Eukaryota</taxon>
        <taxon>Fungi</taxon>
        <taxon>Dikarya</taxon>
        <taxon>Ascomycota</taxon>
        <taxon>Saccharomycotina</taxon>
        <taxon>Saccharomycetes</taxon>
        <taxon>Saccharomycetales</taxon>
        <taxon>Saccharomycetaceae</taxon>
        <taxon>Saccharomyces</taxon>
    </lineage>
</organism>
<evidence type="ECO:0000255" key="1"/>
<evidence type="ECO:0000269" key="2">
    <source>
    </source>
</evidence>
<evidence type="ECO:0000269" key="3">
    <source>
    </source>
</evidence>
<evidence type="ECO:0000269" key="4">
    <source>
    </source>
</evidence>
<evidence type="ECO:0000269" key="5">
    <source>
    </source>
</evidence>
<evidence type="ECO:0000269" key="6">
    <source>
    </source>
</evidence>
<evidence type="ECO:0000269" key="7">
    <source>
    </source>
</evidence>
<evidence type="ECO:0000305" key="8"/>
<proteinExistence type="evidence at protein level"/>
<name>UBX2_YEAST</name>
<comment type="function">
    <text evidence="3 4 5 6">Integral endoplasmic reticulum membrane protein that coordinates the assembly of the ER-associated protein degradation (ERAD) machinery at the ER membrane. Mediates binding of CDC48 to the E3 ubiquitin ligases SSM4/DOA10 and HRD1, and to ERAD substrates. Component of the DOA10 ubiquitin ligase complex, which is part of the ERAD-C pathway responsible for the rapid degradation of membrane proteins with misfolded cytoplasmic domains. ERAD-C substrates are ubiquitinated through DOA10 in conjunction with the E2 ubiquitin-conjugating enzymes UBC6 and UBC7-CUE1. Also a component of the HRD1 ubiquitin ligase complex, which is part of the ERAD-L and ERAD-M pathways responsible for the rapid degradation of soluble lumenal and membrane proteins with misfolded lumenal domains (ERAD-L), or ER-membrane proteins with misfolded transmembrane domains (ERAD-M). ERAD-L substrates are ubiquitinated through HRD1 in conjunction with the E2 ubiquitin-conjugating enzymes UBC1 and UBC7-CUE1. Ubiquitinated substrates are then removed to the cytosol via the action of the CDC48-NPL4-UFD1 ATPase complex and targeted to the proteasome.</text>
</comment>
<comment type="subunit">
    <text evidence="3 4 5 6 7">Component of the DOA10 ubiquitin ligase complex which contains E3 ligase SSM4/DOA10 and CDC48-binding protein UBX2/SEL1 (PubMed:16873066). Component of the HRD1 ubiquitin ligase complex which contains the E3 ligase HRD1, its cofactors HRD3, USA1 and DER1, substrate recruiting factor YOS9 and UBX2 (PubMed:16873066). In ERAD-L, HRD3 and YOS9 jointly bind misfolded glycoproteins in the endoplasmic reticulum (ER) lumen (PubMed:32327568). Movement of ERAD-L substrates through the ER membrane is facilitated by HRD1 and DER1 which have lateral gates facing each other and which distort the membrane region between the lateral gates, making it much thinner than a normal phospholipid bilayer (PubMed:32327568). Substrates insert into the membrane as a hairpin loop with one strand interacting with DER1 and the other with HRD1 (PubMed:32327568). Both the DOA10 and HRD1 ubiquitin ligase complexes interact with the heterotrimeric CDC48-NPL4-UFD1 ATPase complex which is recruited by UBX2 via its interaction with CDC48 and which moves ubiquitinated substrates to the cytosol for targeting to the proteasome (PubMed:15258615, PubMed:16179952, PubMed:16179953, PubMed:16873066).</text>
</comment>
<comment type="interaction">
    <interactant intactId="EBI-27730">
        <id>Q04228</id>
    </interactant>
    <interactant intactId="EBI-4308">
        <id>P25694</id>
        <label>CDC48</label>
    </interactant>
    <organismsDiffer>false</organismsDiffer>
    <experiments>16</experiments>
</comment>
<comment type="interaction">
    <interactant intactId="EBI-27730">
        <id>Q04228</id>
    </interactant>
    <interactant intactId="EBI-37613">
        <id>Q08109</id>
        <label>HRD1</label>
    </interactant>
    <organismsDiffer>false</organismsDiffer>
    <experiments>7</experiments>
</comment>
<comment type="interaction">
    <interactant intactId="EBI-27730">
        <id>Q04228</id>
    </interactant>
    <interactant intactId="EBI-18208">
        <id>P40318</id>
        <label>SSM4</label>
    </interactant>
    <organismsDiffer>false</organismsDiffer>
    <experiments>5</experiments>
</comment>
<comment type="interaction">
    <interactant intactId="EBI-27730">
        <id>Q04228</id>
    </interactant>
    <interactant intactId="EBI-19997">
        <id>P53044</id>
        <label>UFD1</label>
    </interactant>
    <organismsDiffer>false</organismsDiffer>
    <experiments>6</experiments>
</comment>
<comment type="interaction">
    <interactant intactId="EBI-27730">
        <id>Q04228</id>
    </interactant>
    <interactant intactId="EBI-27760">
        <id>Q03714</id>
        <label>USA1</label>
    </interactant>
    <organismsDiffer>false</organismsDiffer>
    <experiments>2</experiments>
</comment>
<comment type="interaction">
    <interactant intactId="EBI-27730">
        <id>Q04228</id>
    </interactant>
    <interactant intactId="EBI-34938">
        <id>Q99220</id>
        <label>YOS9</label>
    </interactant>
    <organismsDiffer>false</organismsDiffer>
    <experiments>3</experiments>
</comment>
<comment type="subcellular location">
    <subcellularLocation>
        <location evidence="8">Endoplasmic reticulum membrane</location>
        <topology evidence="8">Multi-pass membrane protein</topology>
    </subcellularLocation>
</comment>
<comment type="miscellaneous">
    <text evidence="2">Present with 12600 molecules/cell in log phase SD medium.</text>
</comment>
<reference key="1">
    <citation type="journal article" date="1997" name="Nature">
        <title>The nucleotide sequence of Saccharomyces cerevisiae chromosome XIII.</title>
        <authorList>
            <person name="Bowman S."/>
            <person name="Churcher C.M."/>
            <person name="Badcock K."/>
            <person name="Brown D."/>
            <person name="Chillingworth T."/>
            <person name="Connor R."/>
            <person name="Dedman K."/>
            <person name="Devlin K."/>
            <person name="Gentles S."/>
            <person name="Hamlin N."/>
            <person name="Hunt S."/>
            <person name="Jagels K."/>
            <person name="Lye G."/>
            <person name="Moule S."/>
            <person name="Odell C."/>
            <person name="Pearson D."/>
            <person name="Rajandream M.A."/>
            <person name="Rice P."/>
            <person name="Skelton J."/>
            <person name="Walsh S.V."/>
            <person name="Whitehead S."/>
            <person name="Barrell B.G."/>
        </authorList>
    </citation>
    <scope>NUCLEOTIDE SEQUENCE [LARGE SCALE GENOMIC DNA]</scope>
    <source>
        <strain>ATCC 204508 / S288c</strain>
    </source>
</reference>
<reference key="2">
    <citation type="journal article" date="2014" name="G3 (Bethesda)">
        <title>The reference genome sequence of Saccharomyces cerevisiae: Then and now.</title>
        <authorList>
            <person name="Engel S.R."/>
            <person name="Dietrich F.S."/>
            <person name="Fisk D.G."/>
            <person name="Binkley G."/>
            <person name="Balakrishnan R."/>
            <person name="Costanzo M.C."/>
            <person name="Dwight S.S."/>
            <person name="Hitz B.C."/>
            <person name="Karra K."/>
            <person name="Nash R.S."/>
            <person name="Weng S."/>
            <person name="Wong E.D."/>
            <person name="Lloyd P."/>
            <person name="Skrzypek M.S."/>
            <person name="Miyasato S.R."/>
            <person name="Simison M."/>
            <person name="Cherry J.M."/>
        </authorList>
    </citation>
    <scope>GENOME REANNOTATION</scope>
    <source>
        <strain>ATCC 204508 / S288c</strain>
    </source>
</reference>
<reference key="3">
    <citation type="journal article" date="2003" name="Nature">
        <title>Global analysis of protein localization in budding yeast.</title>
        <authorList>
            <person name="Huh W.-K."/>
            <person name="Falvo J.V."/>
            <person name="Gerke L.C."/>
            <person name="Carroll A.S."/>
            <person name="Howson R.W."/>
            <person name="Weissman J.S."/>
            <person name="O'Shea E.K."/>
        </authorList>
    </citation>
    <scope>SUBCELLULAR LOCATION [LARGE SCALE ANALYSIS]</scope>
</reference>
<reference key="4">
    <citation type="journal article" date="2003" name="Nature">
        <title>Global analysis of protein expression in yeast.</title>
        <authorList>
            <person name="Ghaemmaghami S."/>
            <person name="Huh W.-K."/>
            <person name="Bower K."/>
            <person name="Howson R.W."/>
            <person name="Belle A."/>
            <person name="Dephoure N."/>
            <person name="O'Shea E.K."/>
            <person name="Weissman J.S."/>
        </authorList>
    </citation>
    <scope>LEVEL OF PROTEIN EXPRESSION [LARGE SCALE ANALYSIS]</scope>
</reference>
<reference key="5">
    <citation type="journal article" date="2004" name="EMBO Rep.">
        <title>Shp1 and Ubx2 are adaptors of Cdc48 involved in ubiquitin-dependent protein degradation.</title>
        <authorList>
            <person name="Schuberth C."/>
            <person name="Richly H."/>
            <person name="Rumpf S."/>
            <person name="Buchberger A."/>
        </authorList>
    </citation>
    <scope>FUNCTION</scope>
    <scope>INTERACTION WITH CDC48</scope>
</reference>
<reference key="6">
    <citation type="journal article" date="2005" name="Nat. Cell Biol.">
        <title>Ubx2 links the Cdc48 complex to ER-associated protein degradation.</title>
        <authorList>
            <person name="Neuber O."/>
            <person name="Jarosch E."/>
            <person name="Volkwein C."/>
            <person name="Walter J."/>
            <person name="Sommer T."/>
        </authorList>
    </citation>
    <scope>FUNCTION</scope>
    <scope>INTERACTION WITH CDC48; SSM4 AND HRD1</scope>
</reference>
<reference key="7">
    <citation type="journal article" date="2005" name="Nat. Cell Biol.">
        <title>Membrane-bound Ubx2 recruits Cdc48 to ubiquitin ligases and their substrates to ensure efficient ER-associated protein degradation.</title>
        <authorList>
            <person name="Schuberth C."/>
            <person name="Buchberger A."/>
        </authorList>
    </citation>
    <scope>FUNCTION</scope>
    <scope>SUBCELLULAR LOCATION</scope>
    <scope>TOPOLOGY</scope>
    <scope>IDENTIFICATION IN COMPLEX WITH SSM4; HRD1; NPL4; CDC48 AND UFD1</scope>
</reference>
<reference key="8">
    <citation type="journal article" date="2006" name="Cell">
        <title>Distinct ubiquitin-ligase complexes define convergent pathways for the degradation of ER proteins.</title>
        <authorList>
            <person name="Carvalho P."/>
            <person name="Goder V."/>
            <person name="Rapoport T.A."/>
        </authorList>
    </citation>
    <scope>FUNCTION</scope>
    <scope>IDENTIFICATION IN THE DOA10 COMPLEX</scope>
    <scope>IDENTIFICATION IN THE HRD1 COMPLEX</scope>
</reference>
<reference key="9">
    <citation type="journal article" date="2020" name="Science">
        <title>Structural basis of ER-associated protein degradation mediated by the Hrd1 ubiquitin ligase complex.</title>
        <authorList>
            <person name="Wu X."/>
            <person name="Siggel M."/>
            <person name="Ovchinnikov S."/>
            <person name="Mi W."/>
            <person name="Svetlov V."/>
            <person name="Nudler E."/>
            <person name="Liao M."/>
            <person name="Hummer G."/>
            <person name="Rapoport T.A."/>
        </authorList>
    </citation>
    <scope>ROLE OF HRD1 COMPLEX</scope>
</reference>
<feature type="chain" id="PRO_0000210999" description="UBX domain-containing protein 2">
    <location>
        <begin position="1"/>
        <end position="584"/>
    </location>
</feature>
<feature type="topological domain" description="Cytoplasmic" evidence="1">
    <location>
        <begin position="1"/>
        <end position="80"/>
    </location>
</feature>
<feature type="transmembrane region" description="Helical" evidence="1">
    <location>
        <begin position="81"/>
        <end position="101"/>
    </location>
</feature>
<feature type="topological domain" description="Lumenal" evidence="1">
    <location>
        <begin position="102"/>
        <end position="151"/>
    </location>
</feature>
<feature type="transmembrane region" description="Helical" evidence="1">
    <location>
        <begin position="152"/>
        <end position="172"/>
    </location>
</feature>
<feature type="topological domain" description="Cytoplasmic" evidence="1">
    <location>
        <begin position="173"/>
        <end position="584"/>
    </location>
</feature>
<feature type="domain" description="UBX">
    <location>
        <begin position="426"/>
        <end position="570"/>
    </location>
</feature>
<dbReference type="EMBL" id="Z49810">
    <property type="protein sequence ID" value="CAA89939.1"/>
    <property type="molecule type" value="Genomic_DNA"/>
</dbReference>
<dbReference type="EMBL" id="BK006946">
    <property type="protein sequence ID" value="DAA09885.1"/>
    <property type="molecule type" value="Genomic_DNA"/>
</dbReference>
<dbReference type="PIR" id="S55106">
    <property type="entry name" value="S55106"/>
</dbReference>
<dbReference type="RefSeq" id="NP_013699.1">
    <property type="nucleotide sequence ID" value="NM_001182371.1"/>
</dbReference>
<dbReference type="BioGRID" id="35156">
    <property type="interactions" value="411"/>
</dbReference>
<dbReference type="ComplexPortal" id="CPX-3070">
    <property type="entry name" value="HRD1 E3 ubiquitin ligase complex"/>
</dbReference>
<dbReference type="ComplexPortal" id="CPX-3074">
    <property type="entry name" value="Doa10 E3 ubiquitin ligase complex"/>
</dbReference>
<dbReference type="DIP" id="DIP-5073N"/>
<dbReference type="FunCoup" id="Q04228">
    <property type="interactions" value="192"/>
</dbReference>
<dbReference type="IntAct" id="Q04228">
    <property type="interactions" value="16"/>
</dbReference>
<dbReference type="MINT" id="Q04228"/>
<dbReference type="STRING" id="4932.YML013W"/>
<dbReference type="TCDB" id="3.A.16.1.6">
    <property type="family name" value="the endoplasmic reticular retrotranslocon (er-rt) family"/>
</dbReference>
<dbReference type="iPTMnet" id="Q04228"/>
<dbReference type="PaxDb" id="4932-YML013W"/>
<dbReference type="PeptideAtlas" id="Q04228"/>
<dbReference type="EnsemblFungi" id="YML013W_mRNA">
    <property type="protein sequence ID" value="YML013W"/>
    <property type="gene ID" value="YML013W"/>
</dbReference>
<dbReference type="GeneID" id="854995"/>
<dbReference type="KEGG" id="sce:YML013W"/>
<dbReference type="AGR" id="SGD:S000004475"/>
<dbReference type="SGD" id="S000004475">
    <property type="gene designation" value="UBX2"/>
</dbReference>
<dbReference type="VEuPathDB" id="FungiDB:YML013W"/>
<dbReference type="eggNOG" id="KOG1363">
    <property type="taxonomic scope" value="Eukaryota"/>
</dbReference>
<dbReference type="HOGENOM" id="CLU_414514_0_0_1"/>
<dbReference type="InParanoid" id="Q04228"/>
<dbReference type="OMA" id="VYAFVEC"/>
<dbReference type="OrthoDB" id="1026733at2759"/>
<dbReference type="BioCyc" id="YEAST:G3O-32617-MONOMER"/>
<dbReference type="Reactome" id="R-SCE-6798695">
    <property type="pathway name" value="Neutrophil degranulation"/>
</dbReference>
<dbReference type="Reactome" id="R-SCE-8980692">
    <property type="pathway name" value="RHOA GTPase cycle"/>
</dbReference>
<dbReference type="BioGRID-ORCS" id="854995">
    <property type="hits" value="8 hits in 10 CRISPR screens"/>
</dbReference>
<dbReference type="PRO" id="PR:Q04228"/>
<dbReference type="Proteomes" id="UP000002311">
    <property type="component" value="Chromosome XIII"/>
</dbReference>
<dbReference type="RNAct" id="Q04228">
    <property type="molecule type" value="protein"/>
</dbReference>
<dbReference type="GO" id="GO:0000837">
    <property type="term" value="C:Doa10p ubiquitin ligase complex"/>
    <property type="evidence" value="ECO:0000314"/>
    <property type="project" value="SGD"/>
</dbReference>
<dbReference type="GO" id="GO:0005783">
    <property type="term" value="C:endoplasmic reticulum"/>
    <property type="evidence" value="ECO:0007005"/>
    <property type="project" value="SGD"/>
</dbReference>
<dbReference type="GO" id="GO:0005789">
    <property type="term" value="C:endoplasmic reticulum membrane"/>
    <property type="evidence" value="ECO:0000314"/>
    <property type="project" value="SGD"/>
</dbReference>
<dbReference type="GO" id="GO:0000836">
    <property type="term" value="C:Hrd1p ubiquitin ligase complex"/>
    <property type="evidence" value="ECO:0000353"/>
    <property type="project" value="ComplexPortal"/>
</dbReference>
<dbReference type="GO" id="GO:0000839">
    <property type="term" value="C:Hrd1p ubiquitin ligase ERAD-L complex"/>
    <property type="evidence" value="ECO:0000314"/>
    <property type="project" value="SGD"/>
</dbReference>
<dbReference type="GO" id="GO:0005811">
    <property type="term" value="C:lipid droplet"/>
    <property type="evidence" value="ECO:0000314"/>
    <property type="project" value="SGD"/>
</dbReference>
<dbReference type="GO" id="GO:0005741">
    <property type="term" value="C:mitochondrial outer membrane"/>
    <property type="evidence" value="ECO:0007005"/>
    <property type="project" value="SGD"/>
</dbReference>
<dbReference type="GO" id="GO:0005886">
    <property type="term" value="C:plasma membrane"/>
    <property type="evidence" value="ECO:0000314"/>
    <property type="project" value="SGD"/>
</dbReference>
<dbReference type="GO" id="GO:0030674">
    <property type="term" value="F:protein-macromolecule adaptor activity"/>
    <property type="evidence" value="ECO:0000314"/>
    <property type="project" value="SGD"/>
</dbReference>
<dbReference type="GO" id="GO:0043130">
    <property type="term" value="F:ubiquitin binding"/>
    <property type="evidence" value="ECO:0000318"/>
    <property type="project" value="GO_Central"/>
</dbReference>
<dbReference type="GO" id="GO:0036503">
    <property type="term" value="P:ERAD pathway"/>
    <property type="evidence" value="ECO:0000315"/>
    <property type="project" value="SGD"/>
</dbReference>
<dbReference type="GO" id="GO:0034389">
    <property type="term" value="P:lipid droplet organization"/>
    <property type="evidence" value="ECO:0000315"/>
    <property type="project" value="SGD"/>
</dbReference>
<dbReference type="GO" id="GO:0072671">
    <property type="term" value="P:mitochondria-associated ubiquitin-dependent protein catabolic process"/>
    <property type="evidence" value="ECO:0000315"/>
    <property type="project" value="SGD"/>
</dbReference>
<dbReference type="GO" id="GO:0034982">
    <property type="term" value="P:mitochondrial protein processing"/>
    <property type="evidence" value="ECO:0000315"/>
    <property type="project" value="SGD"/>
</dbReference>
<dbReference type="GO" id="GO:0043161">
    <property type="term" value="P:proteasome-mediated ubiquitin-dependent protein catabolic process"/>
    <property type="evidence" value="ECO:0000315"/>
    <property type="project" value="SGD"/>
</dbReference>
<dbReference type="CDD" id="cd14273">
    <property type="entry name" value="UBA_TAP-C_like"/>
    <property type="match status" value="1"/>
</dbReference>
<dbReference type="Gene3D" id="1.10.8.10">
    <property type="entry name" value="DNA helicase RuvA subunit, C-terminal domain"/>
    <property type="match status" value="1"/>
</dbReference>
<dbReference type="Gene3D" id="3.10.20.90">
    <property type="entry name" value="Phosphatidylinositol 3-kinase Catalytic Subunit, Chain A, domain 1"/>
    <property type="match status" value="1"/>
</dbReference>
<dbReference type="InterPro" id="IPR001012">
    <property type="entry name" value="UBX_dom"/>
</dbReference>
<dbReference type="InterPro" id="IPR050730">
    <property type="entry name" value="UBX_domain-protein"/>
</dbReference>
<dbReference type="PANTHER" id="PTHR23322:SF1">
    <property type="entry name" value="FAS-ASSOCIATED FACTOR 2"/>
    <property type="match status" value="1"/>
</dbReference>
<dbReference type="PANTHER" id="PTHR23322">
    <property type="entry name" value="FAS-ASSOCIATED PROTEIN"/>
    <property type="match status" value="1"/>
</dbReference>
<dbReference type="Pfam" id="PF14555">
    <property type="entry name" value="UBA_4"/>
    <property type="match status" value="1"/>
</dbReference>
<dbReference type="SMART" id="SM00166">
    <property type="entry name" value="UBX"/>
    <property type="match status" value="1"/>
</dbReference>
<keyword id="KW-0256">Endoplasmic reticulum</keyword>
<keyword id="KW-0472">Membrane</keyword>
<keyword id="KW-1185">Reference proteome</keyword>
<keyword id="KW-0812">Transmembrane</keyword>
<keyword id="KW-1133">Transmembrane helix</keyword>
<keyword id="KW-0833">Ubl conjugation pathway</keyword>
<protein>
    <recommendedName>
        <fullName>UBX domain-containing protein 2</fullName>
    </recommendedName>
    <alternativeName>
        <fullName>Secretion lowering protein 1</fullName>
    </alternativeName>
</protein>
<gene>
    <name type="primary">UBX2</name>
    <name type="synonym">SEL1</name>
    <name type="ordered locus">YML013W</name>
    <name type="ORF">YM9571.05</name>
</gene>
<accession>Q04228</accession>
<accession>D6VZG1</accession>